<evidence type="ECO:0000255" key="1"/>
<evidence type="ECO:0000269" key="2">
    <source>
    </source>
</evidence>
<evidence type="ECO:0000303" key="3">
    <source>
    </source>
</evidence>
<evidence type="ECO:0000305" key="4"/>
<evidence type="ECO:0000305" key="5">
    <source>
    </source>
</evidence>
<sequence>MNLKTFCFFLLGIFVTLTVTVIPIANADAEADTFRGPCLKIKGYKC</sequence>
<dbReference type="GO" id="GO:0005576">
    <property type="term" value="C:extracellular region"/>
    <property type="evidence" value="ECO:0007669"/>
    <property type="project" value="UniProtKB-SubCell"/>
</dbReference>
<dbReference type="GO" id="GO:0090729">
    <property type="term" value="F:toxin activity"/>
    <property type="evidence" value="ECO:0007669"/>
    <property type="project" value="UniProtKB-KW"/>
</dbReference>
<feature type="signal peptide" evidence="1">
    <location>
        <begin position="1"/>
        <end position="20"/>
    </location>
</feature>
<feature type="propeptide" id="PRO_0000447084" evidence="5">
    <location>
        <begin position="21"/>
        <end position="33"/>
    </location>
</feature>
<feature type="peptide" id="PRO_0000447085" description="U-myrmeciitoxin(01)-Mg6a">
    <location>
        <begin position="34"/>
        <end position="46"/>
    </location>
</feature>
<protein>
    <recommendedName>
        <fullName evidence="4">U-myrmeciitoxin(01)-Mg6a</fullName>
        <shortName evidence="3">MIITX(01)-Mg6a</shortName>
        <shortName evidence="4">U-MIITX(01)-Mg6a</shortName>
    </recommendedName>
</protein>
<reference key="1">
    <citation type="journal article" date="2018" name="Sci. Adv.">
        <title>A comprehensive portrait of the venom of the giant red bull ant, Myrmecia gulosa, reveals a hyperdiverse hymenopteran toxin gene family.</title>
        <authorList>
            <person name="Robinson S.D."/>
            <person name="Mueller A."/>
            <person name="Clayton D."/>
            <person name="Starobova H."/>
            <person name="Hamilton B.R."/>
            <person name="Payne R.J."/>
            <person name="Vetter I."/>
            <person name="King G.F."/>
            <person name="Undheim E.A.B."/>
        </authorList>
    </citation>
    <scope>NUCLEOTIDE SEQUENCE [MRNA]</scope>
    <scope>MASS SPECTROMETRY</scope>
    <scope>SUBCELLULAR LOCATION</scope>
    <source>
        <tissue>Venom</tissue>
        <tissue>Venom gland</tissue>
    </source>
</reference>
<organism>
    <name type="scientific">Myrmecia gulosa</name>
    <name type="common">Red bulldog ant</name>
    <dbReference type="NCBI Taxonomy" id="36170"/>
    <lineage>
        <taxon>Eukaryota</taxon>
        <taxon>Metazoa</taxon>
        <taxon>Ecdysozoa</taxon>
        <taxon>Arthropoda</taxon>
        <taxon>Hexapoda</taxon>
        <taxon>Insecta</taxon>
        <taxon>Pterygota</taxon>
        <taxon>Neoptera</taxon>
        <taxon>Endopterygota</taxon>
        <taxon>Hymenoptera</taxon>
        <taxon>Apocrita</taxon>
        <taxon>Aculeata</taxon>
        <taxon>Formicoidea</taxon>
        <taxon>Formicidae</taxon>
        <taxon>Myrmeciinae</taxon>
        <taxon>Myrmeciini</taxon>
        <taxon>Myrmecia</taxon>
    </lineage>
</organism>
<keyword id="KW-1015">Disulfide bond</keyword>
<keyword id="KW-0964">Secreted</keyword>
<keyword id="KW-0732">Signal</keyword>
<keyword id="KW-0800">Toxin</keyword>
<name>TX16A_MYRGU</name>
<comment type="subcellular location">
    <subcellularLocation>
        <location evidence="2">Secreted</location>
    </subcellularLocation>
</comment>
<comment type="tissue specificity">
    <text evidence="5">Expressed by the venom gland.</text>
</comment>
<comment type="PTM">
    <text evidence="4">Contains 1 disulfide bond.</text>
</comment>
<comment type="mass spectrometry"/>
<comment type="similarity">
    <text evidence="4">Belongs to the formicidae venom precursor-01 superfamily.</text>
</comment>
<comment type="online information" name="National Center for Biotechnology Information (NCBI)">
    <link uri="https://www.ncbi.nlm.nih.gov/nuccore/GGFG01000008"/>
</comment>
<accession>P0DSK1</accession>
<proteinExistence type="evidence at protein level"/>